<evidence type="ECO:0000255" key="1">
    <source>
        <dbReference type="PROSITE-ProRule" id="PRU00932"/>
    </source>
</evidence>
<evidence type="ECO:0000256" key="2">
    <source>
        <dbReference type="SAM" id="MobiDB-lite"/>
    </source>
</evidence>
<evidence type="ECO:0000269" key="3">
    <source>
    </source>
</evidence>
<evidence type="ECO:0000303" key="4">
    <source>
    </source>
</evidence>
<evidence type="ECO:0000305" key="5"/>
<evidence type="ECO:0000305" key="6">
    <source>
    </source>
</evidence>
<dbReference type="EC" id="2.1.1.156" evidence="6"/>
<dbReference type="EC" id="2.1.1.157" evidence="3"/>
<dbReference type="EMBL" id="AF216283">
    <property type="protein sequence ID" value="AAF87204.1"/>
    <property type="molecule type" value="Genomic_DNA"/>
</dbReference>
<dbReference type="SMR" id="Q9KJ20"/>
<dbReference type="KEGG" id="ag:AAF87204"/>
<dbReference type="BioCyc" id="MetaCyc:MONOMER-8544"/>
<dbReference type="BRENDA" id="2.1.1.156">
    <property type="organism ID" value="7834"/>
</dbReference>
<dbReference type="UniPathway" id="UPA00530">
    <property type="reaction ID" value="UER00381"/>
</dbReference>
<dbReference type="UniPathway" id="UPA00530">
    <property type="reaction ID" value="UER00382"/>
</dbReference>
<dbReference type="UniPathway" id="UPA00530">
    <property type="reaction ID" value="UER00383"/>
</dbReference>
<dbReference type="GO" id="GO:0005829">
    <property type="term" value="C:cytosol"/>
    <property type="evidence" value="ECO:0007669"/>
    <property type="project" value="TreeGrafter"/>
</dbReference>
<dbReference type="GO" id="GO:0052729">
    <property type="term" value="F:dimethylglycine N-methyltransferase activity"/>
    <property type="evidence" value="ECO:0000314"/>
    <property type="project" value="UniProtKB"/>
</dbReference>
<dbReference type="GO" id="GO:0016594">
    <property type="term" value="F:glycine binding"/>
    <property type="evidence" value="ECO:0007669"/>
    <property type="project" value="TreeGrafter"/>
</dbReference>
<dbReference type="GO" id="GO:0017174">
    <property type="term" value="F:glycine N-methyltransferase activity"/>
    <property type="evidence" value="ECO:0007669"/>
    <property type="project" value="InterPro"/>
</dbReference>
<dbReference type="GO" id="GO:0042802">
    <property type="term" value="F:identical protein binding"/>
    <property type="evidence" value="ECO:0007669"/>
    <property type="project" value="TreeGrafter"/>
</dbReference>
<dbReference type="GO" id="GO:1904047">
    <property type="term" value="F:S-adenosyl-L-methionine binding"/>
    <property type="evidence" value="ECO:0007669"/>
    <property type="project" value="TreeGrafter"/>
</dbReference>
<dbReference type="GO" id="GO:0052730">
    <property type="term" value="F:sarcosine N-methyltransferase activity"/>
    <property type="evidence" value="ECO:0000314"/>
    <property type="project" value="UniProtKB"/>
</dbReference>
<dbReference type="GO" id="GO:0019286">
    <property type="term" value="P:glycine betaine biosynthetic process from glycine"/>
    <property type="evidence" value="ECO:0000314"/>
    <property type="project" value="UniProtKB"/>
</dbReference>
<dbReference type="GO" id="GO:0032259">
    <property type="term" value="P:methylation"/>
    <property type="evidence" value="ECO:0000314"/>
    <property type="project" value="UniProtKB"/>
</dbReference>
<dbReference type="GO" id="GO:0006730">
    <property type="term" value="P:one-carbon metabolic process"/>
    <property type="evidence" value="ECO:0007669"/>
    <property type="project" value="TreeGrafter"/>
</dbReference>
<dbReference type="GO" id="GO:0051289">
    <property type="term" value="P:protein homotetramerization"/>
    <property type="evidence" value="ECO:0007669"/>
    <property type="project" value="TreeGrafter"/>
</dbReference>
<dbReference type="GO" id="GO:0006111">
    <property type="term" value="P:regulation of gluconeogenesis"/>
    <property type="evidence" value="ECO:0007669"/>
    <property type="project" value="TreeGrafter"/>
</dbReference>
<dbReference type="GO" id="GO:0046498">
    <property type="term" value="P:S-adenosylhomocysteine metabolic process"/>
    <property type="evidence" value="ECO:0007669"/>
    <property type="project" value="TreeGrafter"/>
</dbReference>
<dbReference type="GO" id="GO:0046500">
    <property type="term" value="P:S-adenosylmethionine metabolic process"/>
    <property type="evidence" value="ECO:0007669"/>
    <property type="project" value="TreeGrafter"/>
</dbReference>
<dbReference type="GO" id="GO:1901052">
    <property type="term" value="P:sarcosine metabolic process"/>
    <property type="evidence" value="ECO:0007669"/>
    <property type="project" value="TreeGrafter"/>
</dbReference>
<dbReference type="CDD" id="cd02440">
    <property type="entry name" value="AdoMet_MTases"/>
    <property type="match status" value="2"/>
</dbReference>
<dbReference type="FunFam" id="3.40.50.150:FF:000461">
    <property type="entry name" value="Sarcosine/dimethylglycine N-methyltransferase"/>
    <property type="match status" value="1"/>
</dbReference>
<dbReference type="Gene3D" id="3.30.46.10">
    <property type="entry name" value="Glycine N-methyltransferase, chain A, domain 1"/>
    <property type="match status" value="1"/>
</dbReference>
<dbReference type="Gene3D" id="3.40.50.150">
    <property type="entry name" value="Vaccinia Virus protein VP39"/>
    <property type="match status" value="2"/>
</dbReference>
<dbReference type="InterPro" id="IPR014369">
    <property type="entry name" value="Gly/Sar_N_MeTrfase"/>
</dbReference>
<dbReference type="InterPro" id="IPR013216">
    <property type="entry name" value="Methyltransf_11"/>
</dbReference>
<dbReference type="InterPro" id="IPR041698">
    <property type="entry name" value="Methyltransf_25"/>
</dbReference>
<dbReference type="InterPro" id="IPR029063">
    <property type="entry name" value="SAM-dependent_MTases_sf"/>
</dbReference>
<dbReference type="PANTHER" id="PTHR16458">
    <property type="entry name" value="GLYCINE N-METHYLTRANSFERASE"/>
    <property type="match status" value="1"/>
</dbReference>
<dbReference type="PANTHER" id="PTHR16458:SF2">
    <property type="entry name" value="GLYCINE N-METHYLTRANSFERASE"/>
    <property type="match status" value="1"/>
</dbReference>
<dbReference type="Pfam" id="PF08241">
    <property type="entry name" value="Methyltransf_11"/>
    <property type="match status" value="1"/>
</dbReference>
<dbReference type="Pfam" id="PF13649">
    <property type="entry name" value="Methyltransf_25"/>
    <property type="match status" value="1"/>
</dbReference>
<dbReference type="SUPFAM" id="SSF53335">
    <property type="entry name" value="S-adenosyl-L-methionine-dependent methyltransferases"/>
    <property type="match status" value="2"/>
</dbReference>
<dbReference type="PROSITE" id="PS51600">
    <property type="entry name" value="SAM_GNMT"/>
    <property type="match status" value="1"/>
</dbReference>
<reference key="1">
    <citation type="journal article" date="2000" name="J. Biol. Chem.">
        <title>Extreme halophiles synthesize betaine from glycine by methylation.</title>
        <authorList>
            <person name="Nyyssola A."/>
            <person name="Kerovuo J."/>
            <person name="Kaukinen P."/>
            <person name="von Weymarn N."/>
            <person name="Reinikainen T."/>
        </authorList>
    </citation>
    <scope>NUCLEOTIDE SEQUENCE [GENOMIC DNA]</scope>
    <scope>FUNCTION AS A METHYLTRANSFERASE</scope>
    <scope>FUNCTION IN BETAINE BIOSYNTHESIS</scope>
    <scope>CATALYTIC ACTIVITY</scope>
    <scope>SUBUNIT</scope>
    <source>
        <strain>ATCC 27976</strain>
    </source>
</reference>
<accession>Q9KJ20</accession>
<proteinExistence type="evidence at protein level"/>
<comment type="function">
    <text evidence="3">Catalyzes the methylation of glycine, sarcosine and dimethylglycine to sarcosine, dimethylglycine and betaine, respectively, with S-adenosylmethionine (AdoMet) acting as the methyl donor (PubMed:10896953). Shows low level of activity on glycine when expressed in E.coli (PubMed:10896953).</text>
</comment>
<comment type="catalytic activity">
    <reaction evidence="6">
        <text>glycine + 2 S-adenosyl-L-methionine = N,N-dimethylglycine + 2 S-adenosyl-L-homocysteine + 2 H(+)</text>
        <dbReference type="Rhea" id="RHEA:32463"/>
        <dbReference type="ChEBI" id="CHEBI:15378"/>
        <dbReference type="ChEBI" id="CHEBI:57305"/>
        <dbReference type="ChEBI" id="CHEBI:57856"/>
        <dbReference type="ChEBI" id="CHEBI:58251"/>
        <dbReference type="ChEBI" id="CHEBI:59789"/>
        <dbReference type="EC" id="2.1.1.156"/>
    </reaction>
    <physiologicalReaction direction="left-to-right" evidence="6">
        <dbReference type="Rhea" id="RHEA:32464"/>
    </physiologicalReaction>
</comment>
<comment type="catalytic activity">
    <reaction evidence="3">
        <text>sarcosine + 2 S-adenosyl-L-methionine = glycine betaine + 2 S-adenosyl-L-homocysteine + 2 H(+)</text>
        <dbReference type="Rhea" id="RHEA:32467"/>
        <dbReference type="ChEBI" id="CHEBI:15378"/>
        <dbReference type="ChEBI" id="CHEBI:17750"/>
        <dbReference type="ChEBI" id="CHEBI:57433"/>
        <dbReference type="ChEBI" id="CHEBI:57856"/>
        <dbReference type="ChEBI" id="CHEBI:59789"/>
        <dbReference type="EC" id="2.1.1.157"/>
    </reaction>
    <physiologicalReaction direction="left-to-right" evidence="3">
        <dbReference type="Rhea" id="RHEA:32468"/>
    </physiologicalReaction>
</comment>
<comment type="catalytic activity">
    <reaction evidence="6">
        <text>glycine + S-adenosyl-L-methionine = sarcosine + S-adenosyl-L-homocysteine + H(+)</text>
        <dbReference type="Rhea" id="RHEA:19937"/>
        <dbReference type="ChEBI" id="CHEBI:15378"/>
        <dbReference type="ChEBI" id="CHEBI:57305"/>
        <dbReference type="ChEBI" id="CHEBI:57433"/>
        <dbReference type="ChEBI" id="CHEBI:57856"/>
        <dbReference type="ChEBI" id="CHEBI:59789"/>
    </reaction>
    <physiologicalReaction direction="left-to-right" evidence="6">
        <dbReference type="Rhea" id="RHEA:19938"/>
    </physiologicalReaction>
</comment>
<comment type="catalytic activity">
    <reaction evidence="3">
        <text>sarcosine + S-adenosyl-L-methionine = N,N-dimethylglycine + S-adenosyl-L-homocysteine + H(+)</text>
        <dbReference type="Rhea" id="RHEA:15453"/>
        <dbReference type="ChEBI" id="CHEBI:15378"/>
        <dbReference type="ChEBI" id="CHEBI:57433"/>
        <dbReference type="ChEBI" id="CHEBI:57856"/>
        <dbReference type="ChEBI" id="CHEBI:58251"/>
        <dbReference type="ChEBI" id="CHEBI:59789"/>
    </reaction>
    <physiologicalReaction direction="left-to-right" evidence="3">
        <dbReference type="Rhea" id="RHEA:15454"/>
    </physiologicalReaction>
</comment>
<comment type="catalytic activity">
    <reaction evidence="3">
        <text>N,N-dimethylglycine + S-adenosyl-L-methionine = glycine betaine + S-adenosyl-L-homocysteine + H(+)</text>
        <dbReference type="Rhea" id="RHEA:10072"/>
        <dbReference type="ChEBI" id="CHEBI:15378"/>
        <dbReference type="ChEBI" id="CHEBI:17750"/>
        <dbReference type="ChEBI" id="CHEBI:57856"/>
        <dbReference type="ChEBI" id="CHEBI:58251"/>
        <dbReference type="ChEBI" id="CHEBI:59789"/>
    </reaction>
    <physiologicalReaction direction="left-to-right" evidence="3">
        <dbReference type="Rhea" id="RHEA:10073"/>
    </physiologicalReaction>
</comment>
<comment type="pathway">
    <text evidence="6">Amine and polyamine biosynthesis; betaine biosynthesis via glycine pathway; betaine from glycine: step 1/3.</text>
</comment>
<comment type="pathway">
    <text evidence="6">Amine and polyamine biosynthesis; betaine biosynthesis via glycine pathway; betaine from glycine: step 2/3.</text>
</comment>
<comment type="pathway">
    <text evidence="6">Amine and polyamine biosynthesis; betaine biosynthesis via glycine pathway; betaine from glycine: step 3/3.</text>
</comment>
<comment type="subunit">
    <text evidence="3">Monomer.</text>
</comment>
<comment type="miscellaneous">
    <text evidence="3">Functionality of the enzyme could be demonstrated only partially (PubMed:10896953). When the complete gene was expressed in E.coli, little activity is detected and most of the protein is found in the cell pellet (PubMed:10896953). Truncated versions of the protein were designed, encoding the GSMT and SDMT moieties separately: the SDMT was successfully expressed in soluble active form, but expression of the truncated GSMT was still not successful (PubMed:10896953).</text>
</comment>
<comment type="similarity">
    <text evidence="1">Belongs to the class I-like SAM-binding methyltransferase superfamily. Glycine N-methyltransferase family.</text>
</comment>
<feature type="chain" id="PRO_0000413613" description="Glycine/sarcosine/dimethylglycine N-methyltransferase">
    <location>
        <begin position="1"/>
        <end position="565"/>
    </location>
</feature>
<feature type="region of interest" description="Disordered" evidence="2">
    <location>
        <begin position="1"/>
        <end position="34"/>
    </location>
</feature>
<feature type="compositionally biased region" description="Basic and acidic residues" evidence="2">
    <location>
        <begin position="1"/>
        <end position="10"/>
    </location>
</feature>
<feature type="binding site" evidence="1">
    <location>
        <position position="45"/>
    </location>
    <ligand>
        <name>S-adenosyl-L-methionine</name>
        <dbReference type="ChEBI" id="CHEBI:59789"/>
    </ligand>
</feature>
<feature type="binding site" evidence="1">
    <location>
        <position position="53"/>
    </location>
    <ligand>
        <name>S-adenosyl-L-methionine</name>
        <dbReference type="ChEBI" id="CHEBI:59789"/>
    </ligand>
</feature>
<feature type="binding site" evidence="1">
    <location>
        <position position="62"/>
    </location>
    <ligand>
        <name>S-adenosyl-L-methionine</name>
        <dbReference type="ChEBI" id="CHEBI:59789"/>
    </ligand>
</feature>
<feature type="binding site" evidence="1">
    <location>
        <position position="86"/>
    </location>
    <ligand>
        <name>S-adenosyl-L-methionine</name>
        <dbReference type="ChEBI" id="CHEBI:59789"/>
    </ligand>
</feature>
<feature type="binding site" evidence="1">
    <location>
        <position position="107"/>
    </location>
    <ligand>
        <name>S-adenosyl-L-methionine</name>
        <dbReference type="ChEBI" id="CHEBI:59789"/>
    </ligand>
</feature>
<feature type="binding site" evidence="1">
    <location>
        <begin position="134"/>
        <end position="135"/>
    </location>
    <ligand>
        <name>S-adenosyl-L-methionine</name>
        <dbReference type="ChEBI" id="CHEBI:59789"/>
    </ligand>
</feature>
<feature type="binding site" evidence="1">
    <location>
        <position position="152"/>
    </location>
    <ligand>
        <name>S-adenosyl-L-methionine</name>
        <dbReference type="ChEBI" id="CHEBI:59789"/>
    </ligand>
</feature>
<feature type="binding site" evidence="1">
    <location>
        <position position="154"/>
    </location>
    <ligand>
        <name>substrate</name>
    </ligand>
</feature>
<feature type="binding site" evidence="1">
    <location>
        <position position="187"/>
    </location>
    <ligand>
        <name>substrate</name>
    </ligand>
</feature>
<feature type="binding site" evidence="1">
    <location>
        <position position="226"/>
    </location>
    <ligand>
        <name>substrate</name>
    </ligand>
</feature>
<name>GSDMT_ACTHA</name>
<organism>
    <name type="scientific">Actinopolyspora halophila</name>
    <dbReference type="NCBI Taxonomy" id="1850"/>
    <lineage>
        <taxon>Bacteria</taxon>
        <taxon>Bacillati</taxon>
        <taxon>Actinomycetota</taxon>
        <taxon>Actinomycetes</taxon>
        <taxon>Actinopolysporales</taxon>
        <taxon>Actinopolysporaceae</taxon>
        <taxon>Actinopolyspora</taxon>
    </lineage>
</organism>
<protein>
    <recommendedName>
        <fullName evidence="5">Glycine/sarcosine/dimethylglycine N-methyltransferase</fullName>
        <shortName evidence="4">SDMT</shortName>
        <ecNumber evidence="6">2.1.1.156</ecNumber>
        <ecNumber evidence="3">2.1.1.157</ecNumber>
    </recommendedName>
    <alternativeName>
        <fullName>Dimethylglycine N-methyltransferase</fullName>
    </alternativeName>
</protein>
<sequence length="565" mass="64719">MTKSVDDLARGDQAGDEQDPVHREQQTFGDNPLEVRDTDHYMHEYVGGFVDKWDDLIDWKKRYESEGSFFIDQLRARGVETVLDAAAGTGFHSVRLLEEGFETVSADGSPQMLAKAFSNGLAYNGHILRVVNADWRWLNRDVHGEYDAIICLGNSFTHLFSERDRRKTLAEFYAMLKHDGVLIIDQRNYDSILDTGFSSKHTYYYAGEDVSAEPDHIDDGLARFKYTFPDKSEFFLNMYPLRKDYMRRLMREVGFQRIDTYGDFQETYGEDEPDFYIHVAEKSYRTEDEFVDMYSNAVHTARDYYNSEDADNFYYHVWGGNDIHVGLYQTPQEDIATASERTVQRMAGKVDISPETRILDLGAGYGGAARYLARTYGCHVTCLNLSEVENQRNREITRAEGLEHLIEVTDGSFEDLPYQDNAFDVVWSQDSFLHSGDRSRVMEEVTRVLKPKGSVLFTDPMASDSAKKNELGPILDRLHLDSLGSPGFYRKELTRLGLQNIEFEDLSEYLPVHYGRVLEVLESRENELAGFIGEEYRAHMKTGLRNWVQAGNGGSLAWGIIHARA</sequence>
<keyword id="KW-0489">Methyltransferase</keyword>
<keyword id="KW-0949">S-adenosyl-L-methionine</keyword>
<keyword id="KW-0808">Transferase</keyword>